<gene>
    <name type="primary">ND1</name>
</gene>
<protein>
    <recommendedName>
        <fullName>NADH-ubiquinone oxidoreductase chain 1</fullName>
        <ecNumber>7.1.1.2</ecNumber>
    </recommendedName>
    <alternativeName>
        <fullName>NADH dehydrogenase subunit 1</fullName>
    </alternativeName>
</protein>
<keyword id="KW-0249">Electron transport</keyword>
<keyword id="KW-0472">Membrane</keyword>
<keyword id="KW-0496">Mitochondrion</keyword>
<keyword id="KW-0999">Mitochondrion inner membrane</keyword>
<keyword id="KW-0520">NAD</keyword>
<keyword id="KW-0679">Respiratory chain</keyword>
<keyword id="KW-1278">Translocase</keyword>
<keyword id="KW-0812">Transmembrane</keyword>
<keyword id="KW-1133">Transmembrane helix</keyword>
<keyword id="KW-0813">Transport</keyword>
<keyword id="KW-0830">Ubiquinone</keyword>
<comment type="function">
    <text evidence="1">Core subunit of the mitochondrial membrane respiratory chain NADH dehydrogenase (Complex I) that is believed to belong to the minimal assembly required for catalysis. Complex I functions in the transfer of electrons from NADH to the respiratory chain. The immediate electron acceptor for the enzyme is believed to be ubiquinone (By similarity).</text>
</comment>
<comment type="catalytic activity">
    <reaction>
        <text>a ubiquinone + NADH + 5 H(+)(in) = a ubiquinol + NAD(+) + 4 H(+)(out)</text>
        <dbReference type="Rhea" id="RHEA:29091"/>
        <dbReference type="Rhea" id="RHEA-COMP:9565"/>
        <dbReference type="Rhea" id="RHEA-COMP:9566"/>
        <dbReference type="ChEBI" id="CHEBI:15378"/>
        <dbReference type="ChEBI" id="CHEBI:16389"/>
        <dbReference type="ChEBI" id="CHEBI:17976"/>
        <dbReference type="ChEBI" id="CHEBI:57540"/>
        <dbReference type="ChEBI" id="CHEBI:57945"/>
        <dbReference type="EC" id="7.1.1.2"/>
    </reaction>
</comment>
<comment type="subcellular location">
    <subcellularLocation>
        <location evidence="1">Mitochondrion inner membrane</location>
        <topology evidence="1">Multi-pass membrane protein</topology>
    </subcellularLocation>
</comment>
<comment type="similarity">
    <text evidence="3">Belongs to the complex I subunit 1 family.</text>
</comment>
<organism>
    <name type="scientific">Paracentrotus lividus</name>
    <name type="common">Common sea urchin</name>
    <dbReference type="NCBI Taxonomy" id="7656"/>
    <lineage>
        <taxon>Eukaryota</taxon>
        <taxon>Metazoa</taxon>
        <taxon>Echinodermata</taxon>
        <taxon>Eleutherozoa</taxon>
        <taxon>Echinozoa</taxon>
        <taxon>Echinoidea</taxon>
        <taxon>Euechinoidea</taxon>
        <taxon>Echinacea</taxon>
        <taxon>Camarodonta</taxon>
        <taxon>Echinidea</taxon>
        <taxon>Echinidae</taxon>
        <taxon>Paracentrotus</taxon>
    </lineage>
</organism>
<reference key="1">
    <citation type="journal article" date="1989" name="J. Biol. Chem.">
        <title>The complete nucleotide sequence, gene organization, and genetic code of the mitochondrial genome of Paracentrotus lividus.</title>
        <authorList>
            <person name="Cantatore P."/>
            <person name="Roberti M."/>
            <person name="Rainaldi G."/>
            <person name="Gadaleta M.N."/>
            <person name="Saccone C."/>
        </authorList>
    </citation>
    <scope>NUCLEOTIDE SEQUENCE [GENOMIC DNA]</scope>
</reference>
<reference key="2">
    <citation type="journal article" date="1988" name="Curr. Genet.">
        <title>Clustering of tRNA genes in Paracentrotus lividus mitochondrial DNA.</title>
        <authorList>
            <person name="Cantatore P."/>
            <person name="Roberti M."/>
            <person name="Rainaldi G."/>
            <person name="Saccone C."/>
            <person name="Gadaleta M.N."/>
        </authorList>
    </citation>
    <scope>NUCLEOTIDE SEQUENCE [GENOMIC DNA]</scope>
</reference>
<evidence type="ECO:0000250" key="1"/>
<evidence type="ECO:0000255" key="2"/>
<evidence type="ECO:0000305" key="3"/>
<name>NU1M_PARLI</name>
<sequence>MTYLFTVLELLSFLVPVLLAVAFLTLVERKVLGYMQFRKGPNIVGPYGLLQPFADGLKLFIKETLKPSTASPYLFFLSPLLFMALALLLWNLMPVHTPTLNFQLSLLLVLGLSSLSVYAILGSGWAANSKYSLIGAIRAVAQTISYEISLALILLSLIIITSSFNLTYIMNAQEFSWFALSCLPLFYIWFVSTLAETNRAPFDLTEGESEIVSGYNVEYAGGPFALFFIAEYANIILMNLFSVVIFLGGPWPANELFPLNVLTIGLKTTLLVFLFLWVRAAYPRFRYDQLMFLTWKSYLPLSIGALCATITIVLTLGIYLPLF</sequence>
<accession>P12772</accession>
<proteinExistence type="inferred from homology"/>
<feature type="chain" id="PRO_0000117446" description="NADH-ubiquinone oxidoreductase chain 1">
    <location>
        <begin position="1"/>
        <end position="323"/>
    </location>
</feature>
<feature type="transmembrane region" description="Helical" evidence="2">
    <location>
        <begin position="4"/>
        <end position="24"/>
    </location>
</feature>
<feature type="transmembrane region" description="Helical" evidence="2">
    <location>
        <begin position="73"/>
        <end position="93"/>
    </location>
</feature>
<feature type="transmembrane region" description="Helical" evidence="2">
    <location>
        <begin position="106"/>
        <end position="126"/>
    </location>
</feature>
<feature type="transmembrane region" description="Helical" evidence="2">
    <location>
        <begin position="150"/>
        <end position="170"/>
    </location>
</feature>
<feature type="transmembrane region" description="Helical" evidence="2">
    <location>
        <begin position="175"/>
        <end position="195"/>
    </location>
</feature>
<feature type="transmembrane region" description="Helical" evidence="2">
    <location>
        <begin position="226"/>
        <end position="246"/>
    </location>
</feature>
<feature type="transmembrane region" description="Helical" evidence="2">
    <location>
        <begin position="256"/>
        <end position="276"/>
    </location>
</feature>
<feature type="transmembrane region" description="Helical" evidence="2">
    <location>
        <begin position="303"/>
        <end position="323"/>
    </location>
</feature>
<dbReference type="EC" id="7.1.1.2"/>
<dbReference type="EMBL" id="J04815">
    <property type="protein sequence ID" value="AAA68133.1"/>
    <property type="molecule type" value="Genomic_DNA"/>
</dbReference>
<dbReference type="EMBL" id="M37162">
    <property type="protein sequence ID" value="AAA65506.2"/>
    <property type="molecule type" value="Genomic_DNA"/>
</dbReference>
<dbReference type="PIR" id="A34284">
    <property type="entry name" value="A34284"/>
</dbReference>
<dbReference type="RefSeq" id="NP_008121.1">
    <property type="nucleotide sequence ID" value="NC_001572.1"/>
</dbReference>
<dbReference type="SMR" id="P12772"/>
<dbReference type="GeneID" id="807712"/>
<dbReference type="CTD" id="4535"/>
<dbReference type="GO" id="GO:0005743">
    <property type="term" value="C:mitochondrial inner membrane"/>
    <property type="evidence" value="ECO:0007669"/>
    <property type="project" value="UniProtKB-SubCell"/>
</dbReference>
<dbReference type="GO" id="GO:0008137">
    <property type="term" value="F:NADH dehydrogenase (ubiquinone) activity"/>
    <property type="evidence" value="ECO:0007669"/>
    <property type="project" value="UniProtKB-EC"/>
</dbReference>
<dbReference type="GO" id="GO:0009060">
    <property type="term" value="P:aerobic respiration"/>
    <property type="evidence" value="ECO:0007669"/>
    <property type="project" value="TreeGrafter"/>
</dbReference>
<dbReference type="HAMAP" id="MF_01350">
    <property type="entry name" value="NDH1_NuoH"/>
    <property type="match status" value="1"/>
</dbReference>
<dbReference type="InterPro" id="IPR001694">
    <property type="entry name" value="NADH_UbQ_OxRdtase_su1/FPO"/>
</dbReference>
<dbReference type="InterPro" id="IPR018086">
    <property type="entry name" value="NADH_UbQ_OxRdtase_su1_CS"/>
</dbReference>
<dbReference type="PANTHER" id="PTHR11432">
    <property type="entry name" value="NADH DEHYDROGENASE SUBUNIT 1"/>
    <property type="match status" value="1"/>
</dbReference>
<dbReference type="PANTHER" id="PTHR11432:SF3">
    <property type="entry name" value="NADH-UBIQUINONE OXIDOREDUCTASE CHAIN 1"/>
    <property type="match status" value="1"/>
</dbReference>
<dbReference type="Pfam" id="PF00146">
    <property type="entry name" value="NADHdh"/>
    <property type="match status" value="1"/>
</dbReference>
<dbReference type="PROSITE" id="PS00667">
    <property type="entry name" value="COMPLEX1_ND1_1"/>
    <property type="match status" value="1"/>
</dbReference>
<dbReference type="PROSITE" id="PS00668">
    <property type="entry name" value="COMPLEX1_ND1_2"/>
    <property type="match status" value="1"/>
</dbReference>
<geneLocation type="mitochondrion"/>